<reference key="1">
    <citation type="journal article" date="1992" name="Science">
        <title>Carnivorous plants: phylogeny and structural evolution.</title>
        <authorList>
            <person name="Albert V.A."/>
            <person name="Williams S.E."/>
            <person name="Chase M.W."/>
        </authorList>
    </citation>
    <scope>NUCLEOTIDE SEQUENCE [GENOMIC DNA]</scope>
</reference>
<feature type="chain" id="PRO_0000062387" description="Ribulose bisphosphate carboxylase large chain">
    <location>
        <begin position="1" status="less than"/>
        <end position="465"/>
    </location>
</feature>
<feature type="active site" description="Proton acceptor" evidence="1">
    <location>
        <position position="165"/>
    </location>
</feature>
<feature type="active site" description="Proton acceptor" evidence="1">
    <location>
        <position position="284"/>
    </location>
</feature>
<feature type="binding site" description="in homodimeric partner" evidence="1">
    <location>
        <position position="113"/>
    </location>
    <ligand>
        <name>substrate</name>
    </ligand>
</feature>
<feature type="binding site" evidence="1">
    <location>
        <position position="163"/>
    </location>
    <ligand>
        <name>substrate</name>
    </ligand>
</feature>
<feature type="binding site" evidence="1">
    <location>
        <position position="167"/>
    </location>
    <ligand>
        <name>substrate</name>
    </ligand>
</feature>
<feature type="binding site" description="via carbamate group" evidence="1">
    <location>
        <position position="191"/>
    </location>
    <ligand>
        <name>Mg(2+)</name>
        <dbReference type="ChEBI" id="CHEBI:18420"/>
    </ligand>
</feature>
<feature type="binding site" evidence="1">
    <location>
        <position position="193"/>
    </location>
    <ligand>
        <name>Mg(2+)</name>
        <dbReference type="ChEBI" id="CHEBI:18420"/>
    </ligand>
</feature>
<feature type="binding site" evidence="1">
    <location>
        <position position="194"/>
    </location>
    <ligand>
        <name>Mg(2+)</name>
        <dbReference type="ChEBI" id="CHEBI:18420"/>
    </ligand>
</feature>
<feature type="binding site" evidence="1">
    <location>
        <position position="285"/>
    </location>
    <ligand>
        <name>substrate</name>
    </ligand>
</feature>
<feature type="binding site" evidence="1">
    <location>
        <position position="317"/>
    </location>
    <ligand>
        <name>substrate</name>
    </ligand>
</feature>
<feature type="binding site" evidence="1">
    <location>
        <position position="369"/>
    </location>
    <ligand>
        <name>substrate</name>
    </ligand>
</feature>
<feature type="site" description="Transition state stabilizer" evidence="1">
    <location>
        <position position="324"/>
    </location>
</feature>
<feature type="modified residue" description="N6,N6,N6-trimethyllysine" evidence="1">
    <location>
        <position position="4"/>
    </location>
</feature>
<feature type="modified residue" description="N6-carboxylysine" evidence="1">
    <location>
        <position position="191"/>
    </location>
</feature>
<feature type="disulfide bond" description="Interchain; in linked form" evidence="1">
    <location>
        <position position="237"/>
    </location>
</feature>
<feature type="non-terminal residue">
    <location>
        <position position="1"/>
    </location>
</feature>
<geneLocation type="chloroplast"/>
<keyword id="KW-0113">Calvin cycle</keyword>
<keyword id="KW-0120">Carbon dioxide fixation</keyword>
<keyword id="KW-0150">Chloroplast</keyword>
<keyword id="KW-1015">Disulfide bond</keyword>
<keyword id="KW-0456">Lyase</keyword>
<keyword id="KW-0460">Magnesium</keyword>
<keyword id="KW-0479">Metal-binding</keyword>
<keyword id="KW-0488">Methylation</keyword>
<keyword id="KW-0503">Monooxygenase</keyword>
<keyword id="KW-0560">Oxidoreductase</keyword>
<keyword id="KW-0601">Photorespiration</keyword>
<keyword id="KW-0602">Photosynthesis</keyword>
<keyword id="KW-0934">Plastid</keyword>
<proteinExistence type="inferred from homology"/>
<organism>
    <name type="scientific">Byrsonima crassifolia</name>
    <name type="common">Cajuil cimarron</name>
    <name type="synonym">Malpighia crassifolia</name>
    <dbReference type="NCBI Taxonomy" id="4270"/>
    <lineage>
        <taxon>Eukaryota</taxon>
        <taxon>Viridiplantae</taxon>
        <taxon>Streptophyta</taxon>
        <taxon>Embryophyta</taxon>
        <taxon>Tracheophyta</taxon>
        <taxon>Spermatophyta</taxon>
        <taxon>Magnoliopsida</taxon>
        <taxon>eudicotyledons</taxon>
        <taxon>Gunneridae</taxon>
        <taxon>Pentapetalae</taxon>
        <taxon>rosids</taxon>
        <taxon>fabids</taxon>
        <taxon>Malpighiales</taxon>
        <taxon>Malpighiaceae</taxon>
        <taxon>Byrsonima</taxon>
    </lineage>
</organism>
<comment type="function">
    <text evidence="1">RuBisCO catalyzes two reactions: the carboxylation of D-ribulose 1,5-bisphosphate, the primary event in carbon dioxide fixation, as well as the oxidative fragmentation of the pentose substrate in the photorespiration process. Both reactions occur simultaneously and in competition at the same active site.</text>
</comment>
<comment type="catalytic activity">
    <reaction evidence="1">
        <text>2 (2R)-3-phosphoglycerate + 2 H(+) = D-ribulose 1,5-bisphosphate + CO2 + H2O</text>
        <dbReference type="Rhea" id="RHEA:23124"/>
        <dbReference type="ChEBI" id="CHEBI:15377"/>
        <dbReference type="ChEBI" id="CHEBI:15378"/>
        <dbReference type="ChEBI" id="CHEBI:16526"/>
        <dbReference type="ChEBI" id="CHEBI:57870"/>
        <dbReference type="ChEBI" id="CHEBI:58272"/>
        <dbReference type="EC" id="4.1.1.39"/>
    </reaction>
</comment>
<comment type="catalytic activity">
    <reaction evidence="1">
        <text>D-ribulose 1,5-bisphosphate + O2 = 2-phosphoglycolate + (2R)-3-phosphoglycerate + 2 H(+)</text>
        <dbReference type="Rhea" id="RHEA:36631"/>
        <dbReference type="ChEBI" id="CHEBI:15378"/>
        <dbReference type="ChEBI" id="CHEBI:15379"/>
        <dbReference type="ChEBI" id="CHEBI:57870"/>
        <dbReference type="ChEBI" id="CHEBI:58033"/>
        <dbReference type="ChEBI" id="CHEBI:58272"/>
    </reaction>
</comment>
<comment type="cofactor">
    <cofactor evidence="1">
        <name>Mg(2+)</name>
        <dbReference type="ChEBI" id="CHEBI:18420"/>
    </cofactor>
    <text evidence="1">Binds 1 Mg(2+) ion per subunit.</text>
</comment>
<comment type="subunit">
    <text evidence="1">Heterohexadecamer of 8 large chains and 8 small chains; disulfide-linked. The disulfide link is formed within the large subunit homodimers.</text>
</comment>
<comment type="subcellular location">
    <subcellularLocation>
        <location>Plastid</location>
        <location>Chloroplast</location>
    </subcellularLocation>
</comment>
<comment type="PTM">
    <text evidence="1">The disulfide bond which can form in the large chain dimeric partners within the hexadecamer appears to be associated with oxidative stress and protein turnover.</text>
</comment>
<comment type="miscellaneous">
    <text evidence="1">The basic functional RuBisCO is composed of a large chain homodimer in a 'head-to-tail' conformation. In form I RuBisCO this homodimer is arranged in a barrel-like tetramer with the small subunits forming a tetrameric 'cap' on each end of the 'barrel'.</text>
</comment>
<comment type="similarity">
    <text evidence="1">Belongs to the RuBisCO large chain family. Type I subfamily.</text>
</comment>
<evidence type="ECO:0000255" key="1">
    <source>
        <dbReference type="HAMAP-Rule" id="MF_01338"/>
    </source>
</evidence>
<protein>
    <recommendedName>
        <fullName evidence="1">Ribulose bisphosphate carboxylase large chain</fullName>
        <shortName evidence="1">RuBisCO large subunit</shortName>
        <ecNumber evidence="1">4.1.1.39</ecNumber>
    </recommendedName>
</protein>
<sequence length="465" mass="51588">VGFKAGVKDYKLTYYTPDYETKDTDILAAFRVTPQPGVPPEEAGAAVAAESSTGTWTTVWTDGLTSLDRYKGRCYHIEPVAGEENQFIAYVAYPLDLFEEGSVTNMFTSIVGNVFGFKALRALRLEDLRIPPAYSKTFQGPPHGIQVERDKLNKYGRPLLGCTIKPKLGLSAKNYGRAVYECLRGGLDFTKDDENVNSQPFMRWRDRFLFCAEAIYKAQAETGEIKGHYLNATAGTCEEMMKRAVFARELGVPIVMHDYLTGGFTANTSLAQYCRDNGLLLHIHRAMHAVIDRQKNHGMHFRVLAKALRMSGGDHIHAGTVVGKLEGEREITLGFVDLLRDDFIEKDRSRGIYFTQDWVSLPGVIPVASGGIHVWHMPALTEIFGDDSVLQFGGGTLGHPWGNAPGAVANRVALEACVQARNEGRDLAREGNEIIREASKWSPELAAACEVWKEIKFEFPAMDTL</sequence>
<dbReference type="EC" id="4.1.1.39" evidence="1"/>
<dbReference type="EMBL" id="L01892">
    <property type="protein sequence ID" value="AAA84094.2"/>
    <property type="molecule type" value="Genomic_DNA"/>
</dbReference>
<dbReference type="SMR" id="P28387"/>
<dbReference type="GO" id="GO:0009507">
    <property type="term" value="C:chloroplast"/>
    <property type="evidence" value="ECO:0007669"/>
    <property type="project" value="UniProtKB-SubCell"/>
</dbReference>
<dbReference type="GO" id="GO:0000287">
    <property type="term" value="F:magnesium ion binding"/>
    <property type="evidence" value="ECO:0007669"/>
    <property type="project" value="InterPro"/>
</dbReference>
<dbReference type="GO" id="GO:0004497">
    <property type="term" value="F:monooxygenase activity"/>
    <property type="evidence" value="ECO:0007669"/>
    <property type="project" value="UniProtKB-KW"/>
</dbReference>
<dbReference type="GO" id="GO:0016984">
    <property type="term" value="F:ribulose-bisphosphate carboxylase activity"/>
    <property type="evidence" value="ECO:0007669"/>
    <property type="project" value="UniProtKB-EC"/>
</dbReference>
<dbReference type="GO" id="GO:0009853">
    <property type="term" value="P:photorespiration"/>
    <property type="evidence" value="ECO:0007669"/>
    <property type="project" value="UniProtKB-KW"/>
</dbReference>
<dbReference type="GO" id="GO:0019253">
    <property type="term" value="P:reductive pentose-phosphate cycle"/>
    <property type="evidence" value="ECO:0007669"/>
    <property type="project" value="UniProtKB-KW"/>
</dbReference>
<dbReference type="CDD" id="cd08212">
    <property type="entry name" value="RuBisCO_large_I"/>
    <property type="match status" value="1"/>
</dbReference>
<dbReference type="FunFam" id="3.20.20.110:FF:000001">
    <property type="entry name" value="Ribulose bisphosphate carboxylase large chain"/>
    <property type="match status" value="1"/>
</dbReference>
<dbReference type="FunFam" id="3.30.70.150:FF:000001">
    <property type="entry name" value="Ribulose bisphosphate carboxylase large chain"/>
    <property type="match status" value="1"/>
</dbReference>
<dbReference type="Gene3D" id="3.20.20.110">
    <property type="entry name" value="Ribulose bisphosphate carboxylase, large subunit, C-terminal domain"/>
    <property type="match status" value="1"/>
</dbReference>
<dbReference type="Gene3D" id="3.30.70.150">
    <property type="entry name" value="RuBisCO large subunit, N-terminal domain"/>
    <property type="match status" value="1"/>
</dbReference>
<dbReference type="HAMAP" id="MF_01338">
    <property type="entry name" value="RuBisCO_L_type1"/>
    <property type="match status" value="1"/>
</dbReference>
<dbReference type="InterPro" id="IPR033966">
    <property type="entry name" value="RuBisCO"/>
</dbReference>
<dbReference type="InterPro" id="IPR020878">
    <property type="entry name" value="RuBisCo_large_chain_AS"/>
</dbReference>
<dbReference type="InterPro" id="IPR000685">
    <property type="entry name" value="RuBisCO_lsu_C"/>
</dbReference>
<dbReference type="InterPro" id="IPR036376">
    <property type="entry name" value="RuBisCO_lsu_C_sf"/>
</dbReference>
<dbReference type="InterPro" id="IPR017443">
    <property type="entry name" value="RuBisCO_lsu_fd_N"/>
</dbReference>
<dbReference type="InterPro" id="IPR036422">
    <property type="entry name" value="RuBisCO_lsu_N_sf"/>
</dbReference>
<dbReference type="InterPro" id="IPR020888">
    <property type="entry name" value="RuBisCO_lsuI"/>
</dbReference>
<dbReference type="NCBIfam" id="NF003252">
    <property type="entry name" value="PRK04208.1"/>
    <property type="match status" value="1"/>
</dbReference>
<dbReference type="PANTHER" id="PTHR42704">
    <property type="entry name" value="RIBULOSE BISPHOSPHATE CARBOXYLASE"/>
    <property type="match status" value="1"/>
</dbReference>
<dbReference type="PANTHER" id="PTHR42704:SF15">
    <property type="entry name" value="RIBULOSE BISPHOSPHATE CARBOXYLASE LARGE CHAIN"/>
    <property type="match status" value="1"/>
</dbReference>
<dbReference type="Pfam" id="PF00016">
    <property type="entry name" value="RuBisCO_large"/>
    <property type="match status" value="1"/>
</dbReference>
<dbReference type="Pfam" id="PF02788">
    <property type="entry name" value="RuBisCO_large_N"/>
    <property type="match status" value="1"/>
</dbReference>
<dbReference type="SFLD" id="SFLDG01052">
    <property type="entry name" value="RuBisCO"/>
    <property type="match status" value="1"/>
</dbReference>
<dbReference type="SFLD" id="SFLDS00014">
    <property type="entry name" value="RuBisCO"/>
    <property type="match status" value="1"/>
</dbReference>
<dbReference type="SFLD" id="SFLDG00301">
    <property type="entry name" value="RuBisCO-like_proteins"/>
    <property type="match status" value="1"/>
</dbReference>
<dbReference type="SUPFAM" id="SSF51649">
    <property type="entry name" value="RuBisCo, C-terminal domain"/>
    <property type="match status" value="1"/>
</dbReference>
<dbReference type="SUPFAM" id="SSF54966">
    <property type="entry name" value="RuBisCO, large subunit, small (N-terminal) domain"/>
    <property type="match status" value="1"/>
</dbReference>
<dbReference type="PROSITE" id="PS00157">
    <property type="entry name" value="RUBISCO_LARGE"/>
    <property type="match status" value="1"/>
</dbReference>
<accession>P28387</accession>
<name>RBL_BYRCR</name>
<gene>
    <name evidence="1" type="primary">rbcL</name>
</gene>